<reference key="1">
    <citation type="journal article" date="2006" name="J. Bacteriol.">
        <title>Whole-genome sequence of Listeria welshimeri reveals common steps in genome reduction with Listeria innocua as compared to Listeria monocytogenes.</title>
        <authorList>
            <person name="Hain T."/>
            <person name="Steinweg C."/>
            <person name="Kuenne C.T."/>
            <person name="Billion A."/>
            <person name="Ghai R."/>
            <person name="Chatterjee S.S."/>
            <person name="Domann E."/>
            <person name="Kaerst U."/>
            <person name="Goesmann A."/>
            <person name="Bekel T."/>
            <person name="Bartels D."/>
            <person name="Kaiser O."/>
            <person name="Meyer F."/>
            <person name="Puehler A."/>
            <person name="Weisshaar B."/>
            <person name="Wehland J."/>
            <person name="Liang C."/>
            <person name="Dandekar T."/>
            <person name="Lampidis R."/>
            <person name="Kreft J."/>
            <person name="Goebel W."/>
            <person name="Chakraborty T."/>
        </authorList>
    </citation>
    <scope>NUCLEOTIDE SEQUENCE [LARGE SCALE GENOMIC DNA]</scope>
    <source>
        <strain>ATCC 35897 / DSM 20650 / CCUG 15529 / CIP 8149 / NCTC 11857 / SLCC 5334 / V8</strain>
    </source>
</reference>
<accession>A0AF21</accession>
<dbReference type="EMBL" id="AM263198">
    <property type="protein sequence ID" value="CAK19603.1"/>
    <property type="molecule type" value="Genomic_DNA"/>
</dbReference>
<dbReference type="RefSeq" id="WP_011701049.1">
    <property type="nucleotide sequence ID" value="NC_008555.1"/>
</dbReference>
<dbReference type="SMR" id="A0AF21"/>
<dbReference type="STRING" id="386043.lwe0185"/>
<dbReference type="GeneID" id="61188064"/>
<dbReference type="KEGG" id="lwe:lwe0185"/>
<dbReference type="eggNOG" id="COG1281">
    <property type="taxonomic scope" value="Bacteria"/>
</dbReference>
<dbReference type="HOGENOM" id="CLU_054493_1_0_9"/>
<dbReference type="OrthoDB" id="9776534at2"/>
<dbReference type="Proteomes" id="UP000000779">
    <property type="component" value="Chromosome"/>
</dbReference>
<dbReference type="GO" id="GO:0005737">
    <property type="term" value="C:cytoplasm"/>
    <property type="evidence" value="ECO:0007669"/>
    <property type="project" value="UniProtKB-SubCell"/>
</dbReference>
<dbReference type="GO" id="GO:0044183">
    <property type="term" value="F:protein folding chaperone"/>
    <property type="evidence" value="ECO:0007669"/>
    <property type="project" value="TreeGrafter"/>
</dbReference>
<dbReference type="GO" id="GO:0051082">
    <property type="term" value="F:unfolded protein binding"/>
    <property type="evidence" value="ECO:0007669"/>
    <property type="project" value="UniProtKB-UniRule"/>
</dbReference>
<dbReference type="GO" id="GO:0042026">
    <property type="term" value="P:protein refolding"/>
    <property type="evidence" value="ECO:0007669"/>
    <property type="project" value="TreeGrafter"/>
</dbReference>
<dbReference type="CDD" id="cd00498">
    <property type="entry name" value="Hsp33"/>
    <property type="match status" value="1"/>
</dbReference>
<dbReference type="Gene3D" id="3.55.30.10">
    <property type="entry name" value="Hsp33 domain"/>
    <property type="match status" value="1"/>
</dbReference>
<dbReference type="Gene3D" id="3.90.1280.10">
    <property type="entry name" value="HSP33 redox switch-like"/>
    <property type="match status" value="1"/>
</dbReference>
<dbReference type="HAMAP" id="MF_00117">
    <property type="entry name" value="HslO"/>
    <property type="match status" value="1"/>
</dbReference>
<dbReference type="InterPro" id="IPR000397">
    <property type="entry name" value="Heat_shock_Hsp33"/>
</dbReference>
<dbReference type="InterPro" id="IPR016154">
    <property type="entry name" value="Heat_shock_Hsp33_C"/>
</dbReference>
<dbReference type="InterPro" id="IPR016153">
    <property type="entry name" value="Heat_shock_Hsp33_N"/>
</dbReference>
<dbReference type="NCBIfam" id="NF001033">
    <property type="entry name" value="PRK00114.1"/>
    <property type="match status" value="1"/>
</dbReference>
<dbReference type="PANTHER" id="PTHR30111">
    <property type="entry name" value="33 KDA CHAPERONIN"/>
    <property type="match status" value="1"/>
</dbReference>
<dbReference type="PANTHER" id="PTHR30111:SF1">
    <property type="entry name" value="33 KDA CHAPERONIN"/>
    <property type="match status" value="1"/>
</dbReference>
<dbReference type="Pfam" id="PF01430">
    <property type="entry name" value="HSP33"/>
    <property type="match status" value="1"/>
</dbReference>
<dbReference type="PIRSF" id="PIRSF005261">
    <property type="entry name" value="Heat_shock_Hsp33"/>
    <property type="match status" value="1"/>
</dbReference>
<dbReference type="SUPFAM" id="SSF64397">
    <property type="entry name" value="Hsp33 domain"/>
    <property type="match status" value="1"/>
</dbReference>
<dbReference type="SUPFAM" id="SSF118352">
    <property type="entry name" value="HSP33 redox switch-like"/>
    <property type="match status" value="1"/>
</dbReference>
<evidence type="ECO:0000255" key="1">
    <source>
        <dbReference type="HAMAP-Rule" id="MF_00117"/>
    </source>
</evidence>
<organism>
    <name type="scientific">Listeria welshimeri serovar 6b (strain ATCC 35897 / DSM 20650 / CCUG 15529 / CIP 8149 / NCTC 11857 / SLCC 5334 / V8)</name>
    <dbReference type="NCBI Taxonomy" id="386043"/>
    <lineage>
        <taxon>Bacteria</taxon>
        <taxon>Bacillati</taxon>
        <taxon>Bacillota</taxon>
        <taxon>Bacilli</taxon>
        <taxon>Bacillales</taxon>
        <taxon>Listeriaceae</taxon>
        <taxon>Listeria</taxon>
    </lineage>
</organism>
<gene>
    <name evidence="1" type="primary">hslO</name>
    <name type="ordered locus">lwe0185</name>
</gene>
<feature type="chain" id="PRO_1000015551" description="33 kDa chaperonin">
    <location>
        <begin position="1"/>
        <end position="294"/>
    </location>
</feature>
<feature type="disulfide bond" description="Redox-active" evidence="1">
    <location>
        <begin position="239"/>
        <end position="241"/>
    </location>
</feature>
<feature type="disulfide bond" description="Redox-active" evidence="1">
    <location>
        <begin position="272"/>
        <end position="275"/>
    </location>
</feature>
<name>HSLO_LISW6</name>
<comment type="function">
    <text evidence="1">Redox regulated molecular chaperone. Protects both thermally unfolding and oxidatively damaged proteins from irreversible aggregation. Plays an important role in the bacterial defense system toward oxidative stress.</text>
</comment>
<comment type="subcellular location">
    <subcellularLocation>
        <location evidence="1">Cytoplasm</location>
    </subcellularLocation>
</comment>
<comment type="PTM">
    <text evidence="1">Under oxidizing conditions two disulfide bonds are formed involving the reactive cysteines. Under reducing conditions zinc is bound to the reactive cysteines and the protein is inactive.</text>
</comment>
<comment type="similarity">
    <text evidence="1">Belongs to the HSP33 family.</text>
</comment>
<keyword id="KW-0143">Chaperone</keyword>
<keyword id="KW-0963">Cytoplasm</keyword>
<keyword id="KW-1015">Disulfide bond</keyword>
<keyword id="KW-0676">Redox-active center</keyword>
<keyword id="KW-0862">Zinc</keyword>
<protein>
    <recommendedName>
        <fullName evidence="1">33 kDa chaperonin</fullName>
    </recommendedName>
    <alternativeName>
        <fullName evidence="1">Heat shock protein 33 homolog</fullName>
        <shortName evidence="1">HSP33</shortName>
    </alternativeName>
</protein>
<sequence length="294" mass="31883">MSDYLIKALAYDGMARVYAAVTTETIKEAQRRHDTWSVSSAALGRTMTGTLFLGAMQKEDQKITVKIEGDGPIGPIVADSNAQGQIRGFVTNPHVHFSELNEAGKLDVRRGVGTSGMLSVVKDLGFGENFTGQTPIVSGEIGEDFTYYLATSEQVNSSVGVGVLVNPDDTIEAAGGFMLQLLPGATDEIIDEIEKNLTALPTVSRMIEAGETPESILAKLAGGEDKLQILEKIPVSFECNCSKERFGSAIISLGKDEIRSMIEEDHGAEAECHFCRNTYDFSEEELEKLYEEAK</sequence>
<proteinExistence type="inferred from homology"/>